<name>PYRG_SHEB8</name>
<comment type="function">
    <text evidence="1">Catalyzes the ATP-dependent amination of UTP to CTP with either L-glutamine or ammonia as the source of nitrogen. Regulates intracellular CTP levels through interactions with the four ribonucleotide triphosphates.</text>
</comment>
<comment type="catalytic activity">
    <reaction evidence="1">
        <text>UTP + L-glutamine + ATP + H2O = CTP + L-glutamate + ADP + phosphate + 2 H(+)</text>
        <dbReference type="Rhea" id="RHEA:26426"/>
        <dbReference type="ChEBI" id="CHEBI:15377"/>
        <dbReference type="ChEBI" id="CHEBI:15378"/>
        <dbReference type="ChEBI" id="CHEBI:29985"/>
        <dbReference type="ChEBI" id="CHEBI:30616"/>
        <dbReference type="ChEBI" id="CHEBI:37563"/>
        <dbReference type="ChEBI" id="CHEBI:43474"/>
        <dbReference type="ChEBI" id="CHEBI:46398"/>
        <dbReference type="ChEBI" id="CHEBI:58359"/>
        <dbReference type="ChEBI" id="CHEBI:456216"/>
        <dbReference type="EC" id="6.3.4.2"/>
    </reaction>
</comment>
<comment type="catalytic activity">
    <reaction evidence="1">
        <text>L-glutamine + H2O = L-glutamate + NH4(+)</text>
        <dbReference type="Rhea" id="RHEA:15889"/>
        <dbReference type="ChEBI" id="CHEBI:15377"/>
        <dbReference type="ChEBI" id="CHEBI:28938"/>
        <dbReference type="ChEBI" id="CHEBI:29985"/>
        <dbReference type="ChEBI" id="CHEBI:58359"/>
    </reaction>
</comment>
<comment type="catalytic activity">
    <reaction evidence="1">
        <text>UTP + NH4(+) + ATP = CTP + ADP + phosphate + 2 H(+)</text>
        <dbReference type="Rhea" id="RHEA:16597"/>
        <dbReference type="ChEBI" id="CHEBI:15378"/>
        <dbReference type="ChEBI" id="CHEBI:28938"/>
        <dbReference type="ChEBI" id="CHEBI:30616"/>
        <dbReference type="ChEBI" id="CHEBI:37563"/>
        <dbReference type="ChEBI" id="CHEBI:43474"/>
        <dbReference type="ChEBI" id="CHEBI:46398"/>
        <dbReference type="ChEBI" id="CHEBI:456216"/>
    </reaction>
</comment>
<comment type="activity regulation">
    <text evidence="1">Allosterically activated by GTP, when glutamine is the substrate; GTP has no effect on the reaction when ammonia is the substrate. The allosteric effector GTP functions by stabilizing the protein conformation that binds the tetrahedral intermediate(s) formed during glutamine hydrolysis. Inhibited by the product CTP, via allosteric rather than competitive inhibition.</text>
</comment>
<comment type="pathway">
    <text evidence="1">Pyrimidine metabolism; CTP biosynthesis via de novo pathway; CTP from UDP: step 2/2.</text>
</comment>
<comment type="subunit">
    <text evidence="1">Homotetramer.</text>
</comment>
<comment type="miscellaneous">
    <text evidence="1">CTPSs have evolved a hybrid strategy for distinguishing between UTP and CTP. The overlapping regions of the product feedback inhibitory and substrate sites recognize a common feature in both compounds, the triphosphate moiety. To differentiate isosteric substrate and product pyrimidine rings, an additional pocket far from the expected kinase/ligase catalytic site, specifically recognizes the cytosine and ribose portions of the product inhibitor.</text>
</comment>
<comment type="similarity">
    <text evidence="1">Belongs to the CTP synthase family.</text>
</comment>
<proteinExistence type="inferred from homology"/>
<evidence type="ECO:0000255" key="1">
    <source>
        <dbReference type="HAMAP-Rule" id="MF_01227"/>
    </source>
</evidence>
<accession>A6WR29</accession>
<gene>
    <name evidence="1" type="primary">pyrG</name>
    <name type="ordered locus">Shew185_3137</name>
</gene>
<reference key="1">
    <citation type="submission" date="2007-07" db="EMBL/GenBank/DDBJ databases">
        <title>Complete sequence of chromosome of Shewanella baltica OS185.</title>
        <authorList>
            <consortium name="US DOE Joint Genome Institute"/>
            <person name="Copeland A."/>
            <person name="Lucas S."/>
            <person name="Lapidus A."/>
            <person name="Barry K."/>
            <person name="Glavina del Rio T."/>
            <person name="Dalin E."/>
            <person name="Tice H."/>
            <person name="Pitluck S."/>
            <person name="Sims D."/>
            <person name="Brettin T."/>
            <person name="Bruce D."/>
            <person name="Detter J.C."/>
            <person name="Han C."/>
            <person name="Schmutz J."/>
            <person name="Larimer F."/>
            <person name="Land M."/>
            <person name="Hauser L."/>
            <person name="Kyrpides N."/>
            <person name="Mikhailova N."/>
            <person name="Brettar I."/>
            <person name="Rodrigues J."/>
            <person name="Konstantinidis K."/>
            <person name="Tiedje J."/>
            <person name="Richardson P."/>
        </authorList>
    </citation>
    <scope>NUCLEOTIDE SEQUENCE [LARGE SCALE GENOMIC DNA]</scope>
    <source>
        <strain>OS185</strain>
    </source>
</reference>
<sequence>MTTRYIFVTGGVVSSLGKGIAAASLAAILEARGLNVTIMKLDPYINVDPGTMSPTQHGEVFVTEDGAETDLDLGHYERFIRTKMNRRNNFTTGRIYEEVLRKERRGDYLGATIQVIPHITNAIKEKVLAGGEGHDVAIVEIGGTVGDIESLPFLESIRQLGVELGRDRTLFMHLTLVPFLGAAGEVKTKPTQHSVKELRSIGIAPDVLVCRGDRAIPANEKAKISLFCNVEERAVISLKDVDSIYKIPALLRSQGLDDLVVKRFGLECREADLSEWENVIYQEANPNGEVVIGMVGKYIELPDAYKSVNEALKHAGLKNRVSVTIKYIDSQTVEAKGEEVLQGLDGILVPGGFGERGVEGKILAAKFARENNLPYFGICLGMQVALIEFARNVAGMADAHSTEFNKETPFPVVGLITEWIDEEGNVEQRHEASDLGGTMRLGAQLCHLLDGSKAAQAYKGNSCVERHRHRYEVNNKYRERLEQAGMIFSGLSSDRKLVEMIELKDHPWFVAGQFHPEFTSTPRDGHPLFEGFIAAASAHQKRDLK</sequence>
<dbReference type="EC" id="6.3.4.2" evidence="1"/>
<dbReference type="EMBL" id="CP000753">
    <property type="protein sequence ID" value="ABS09268.1"/>
    <property type="molecule type" value="Genomic_DNA"/>
</dbReference>
<dbReference type="RefSeq" id="WP_006082617.1">
    <property type="nucleotide sequence ID" value="NC_009665.1"/>
</dbReference>
<dbReference type="SMR" id="A6WR29"/>
<dbReference type="KEGG" id="sbm:Shew185_3137"/>
<dbReference type="HOGENOM" id="CLU_011675_5_0_6"/>
<dbReference type="UniPathway" id="UPA00159">
    <property type="reaction ID" value="UER00277"/>
</dbReference>
<dbReference type="GO" id="GO:0005829">
    <property type="term" value="C:cytosol"/>
    <property type="evidence" value="ECO:0007669"/>
    <property type="project" value="TreeGrafter"/>
</dbReference>
<dbReference type="GO" id="GO:0005524">
    <property type="term" value="F:ATP binding"/>
    <property type="evidence" value="ECO:0007669"/>
    <property type="project" value="UniProtKB-KW"/>
</dbReference>
<dbReference type="GO" id="GO:0003883">
    <property type="term" value="F:CTP synthase activity"/>
    <property type="evidence" value="ECO:0007669"/>
    <property type="project" value="UniProtKB-UniRule"/>
</dbReference>
<dbReference type="GO" id="GO:0004359">
    <property type="term" value="F:glutaminase activity"/>
    <property type="evidence" value="ECO:0007669"/>
    <property type="project" value="RHEA"/>
</dbReference>
<dbReference type="GO" id="GO:0042802">
    <property type="term" value="F:identical protein binding"/>
    <property type="evidence" value="ECO:0007669"/>
    <property type="project" value="TreeGrafter"/>
</dbReference>
<dbReference type="GO" id="GO:0046872">
    <property type="term" value="F:metal ion binding"/>
    <property type="evidence" value="ECO:0007669"/>
    <property type="project" value="UniProtKB-KW"/>
</dbReference>
<dbReference type="GO" id="GO:0044210">
    <property type="term" value="P:'de novo' CTP biosynthetic process"/>
    <property type="evidence" value="ECO:0007669"/>
    <property type="project" value="UniProtKB-UniRule"/>
</dbReference>
<dbReference type="GO" id="GO:0019856">
    <property type="term" value="P:pyrimidine nucleobase biosynthetic process"/>
    <property type="evidence" value="ECO:0007669"/>
    <property type="project" value="TreeGrafter"/>
</dbReference>
<dbReference type="CDD" id="cd03113">
    <property type="entry name" value="CTPS_N"/>
    <property type="match status" value="1"/>
</dbReference>
<dbReference type="CDD" id="cd01746">
    <property type="entry name" value="GATase1_CTP_Synthase"/>
    <property type="match status" value="1"/>
</dbReference>
<dbReference type="FunFam" id="3.40.50.300:FF:000009">
    <property type="entry name" value="CTP synthase"/>
    <property type="match status" value="1"/>
</dbReference>
<dbReference type="FunFam" id="3.40.50.880:FF:000002">
    <property type="entry name" value="CTP synthase"/>
    <property type="match status" value="1"/>
</dbReference>
<dbReference type="Gene3D" id="3.40.50.880">
    <property type="match status" value="1"/>
</dbReference>
<dbReference type="Gene3D" id="3.40.50.300">
    <property type="entry name" value="P-loop containing nucleotide triphosphate hydrolases"/>
    <property type="match status" value="1"/>
</dbReference>
<dbReference type="HAMAP" id="MF_01227">
    <property type="entry name" value="PyrG"/>
    <property type="match status" value="1"/>
</dbReference>
<dbReference type="InterPro" id="IPR029062">
    <property type="entry name" value="Class_I_gatase-like"/>
</dbReference>
<dbReference type="InterPro" id="IPR004468">
    <property type="entry name" value="CTP_synthase"/>
</dbReference>
<dbReference type="InterPro" id="IPR017456">
    <property type="entry name" value="CTP_synthase_N"/>
</dbReference>
<dbReference type="InterPro" id="IPR017926">
    <property type="entry name" value="GATASE"/>
</dbReference>
<dbReference type="InterPro" id="IPR033828">
    <property type="entry name" value="GATase1_CTP_Synthase"/>
</dbReference>
<dbReference type="InterPro" id="IPR027417">
    <property type="entry name" value="P-loop_NTPase"/>
</dbReference>
<dbReference type="NCBIfam" id="NF003792">
    <property type="entry name" value="PRK05380.1"/>
    <property type="match status" value="1"/>
</dbReference>
<dbReference type="NCBIfam" id="TIGR00337">
    <property type="entry name" value="PyrG"/>
    <property type="match status" value="1"/>
</dbReference>
<dbReference type="PANTHER" id="PTHR11550">
    <property type="entry name" value="CTP SYNTHASE"/>
    <property type="match status" value="1"/>
</dbReference>
<dbReference type="PANTHER" id="PTHR11550:SF0">
    <property type="entry name" value="CTP SYNTHASE-RELATED"/>
    <property type="match status" value="1"/>
</dbReference>
<dbReference type="Pfam" id="PF06418">
    <property type="entry name" value="CTP_synth_N"/>
    <property type="match status" value="1"/>
</dbReference>
<dbReference type="Pfam" id="PF00117">
    <property type="entry name" value="GATase"/>
    <property type="match status" value="1"/>
</dbReference>
<dbReference type="SUPFAM" id="SSF52317">
    <property type="entry name" value="Class I glutamine amidotransferase-like"/>
    <property type="match status" value="1"/>
</dbReference>
<dbReference type="SUPFAM" id="SSF52540">
    <property type="entry name" value="P-loop containing nucleoside triphosphate hydrolases"/>
    <property type="match status" value="1"/>
</dbReference>
<dbReference type="PROSITE" id="PS51273">
    <property type="entry name" value="GATASE_TYPE_1"/>
    <property type="match status" value="1"/>
</dbReference>
<keyword id="KW-0067">ATP-binding</keyword>
<keyword id="KW-0315">Glutamine amidotransferase</keyword>
<keyword id="KW-0436">Ligase</keyword>
<keyword id="KW-0460">Magnesium</keyword>
<keyword id="KW-0479">Metal-binding</keyword>
<keyword id="KW-0547">Nucleotide-binding</keyword>
<keyword id="KW-0665">Pyrimidine biosynthesis</keyword>
<protein>
    <recommendedName>
        <fullName evidence="1">CTP synthase</fullName>
        <ecNumber evidence="1">6.3.4.2</ecNumber>
    </recommendedName>
    <alternativeName>
        <fullName evidence="1">Cytidine 5'-triphosphate synthase</fullName>
    </alternativeName>
    <alternativeName>
        <fullName evidence="1">Cytidine triphosphate synthetase</fullName>
        <shortName evidence="1">CTP synthetase</shortName>
        <shortName evidence="1">CTPS</shortName>
    </alternativeName>
    <alternativeName>
        <fullName evidence="1">UTP--ammonia ligase</fullName>
    </alternativeName>
</protein>
<feature type="chain" id="PRO_1000139569" description="CTP synthase">
    <location>
        <begin position="1"/>
        <end position="545"/>
    </location>
</feature>
<feature type="domain" description="Glutamine amidotransferase type-1" evidence="1">
    <location>
        <begin position="291"/>
        <end position="542"/>
    </location>
</feature>
<feature type="region of interest" description="Amidoligase domain" evidence="1">
    <location>
        <begin position="1"/>
        <end position="266"/>
    </location>
</feature>
<feature type="active site" description="Nucleophile; for glutamine hydrolysis" evidence="1">
    <location>
        <position position="379"/>
    </location>
</feature>
<feature type="active site" evidence="1">
    <location>
        <position position="515"/>
    </location>
</feature>
<feature type="active site" evidence="1">
    <location>
        <position position="517"/>
    </location>
</feature>
<feature type="binding site" evidence="1">
    <location>
        <position position="14"/>
    </location>
    <ligand>
        <name>CTP</name>
        <dbReference type="ChEBI" id="CHEBI:37563"/>
        <note>allosteric inhibitor</note>
    </ligand>
</feature>
<feature type="binding site" evidence="1">
    <location>
        <position position="14"/>
    </location>
    <ligand>
        <name>UTP</name>
        <dbReference type="ChEBI" id="CHEBI:46398"/>
    </ligand>
</feature>
<feature type="binding site" evidence="1">
    <location>
        <begin position="15"/>
        <end position="20"/>
    </location>
    <ligand>
        <name>ATP</name>
        <dbReference type="ChEBI" id="CHEBI:30616"/>
    </ligand>
</feature>
<feature type="binding site" evidence="1">
    <location>
        <position position="72"/>
    </location>
    <ligand>
        <name>ATP</name>
        <dbReference type="ChEBI" id="CHEBI:30616"/>
    </ligand>
</feature>
<feature type="binding site" evidence="1">
    <location>
        <position position="72"/>
    </location>
    <ligand>
        <name>Mg(2+)</name>
        <dbReference type="ChEBI" id="CHEBI:18420"/>
    </ligand>
</feature>
<feature type="binding site" evidence="1">
    <location>
        <position position="140"/>
    </location>
    <ligand>
        <name>Mg(2+)</name>
        <dbReference type="ChEBI" id="CHEBI:18420"/>
    </ligand>
</feature>
<feature type="binding site" evidence="1">
    <location>
        <begin position="147"/>
        <end position="149"/>
    </location>
    <ligand>
        <name>CTP</name>
        <dbReference type="ChEBI" id="CHEBI:37563"/>
        <note>allosteric inhibitor</note>
    </ligand>
</feature>
<feature type="binding site" evidence="1">
    <location>
        <begin position="187"/>
        <end position="192"/>
    </location>
    <ligand>
        <name>CTP</name>
        <dbReference type="ChEBI" id="CHEBI:37563"/>
        <note>allosteric inhibitor</note>
    </ligand>
</feature>
<feature type="binding site" evidence="1">
    <location>
        <begin position="187"/>
        <end position="192"/>
    </location>
    <ligand>
        <name>UTP</name>
        <dbReference type="ChEBI" id="CHEBI:46398"/>
    </ligand>
</feature>
<feature type="binding site" evidence="1">
    <location>
        <position position="223"/>
    </location>
    <ligand>
        <name>CTP</name>
        <dbReference type="ChEBI" id="CHEBI:37563"/>
        <note>allosteric inhibitor</note>
    </ligand>
</feature>
<feature type="binding site" evidence="1">
    <location>
        <position position="223"/>
    </location>
    <ligand>
        <name>UTP</name>
        <dbReference type="ChEBI" id="CHEBI:46398"/>
    </ligand>
</feature>
<feature type="binding site" evidence="1">
    <location>
        <begin position="239"/>
        <end position="241"/>
    </location>
    <ligand>
        <name>ATP</name>
        <dbReference type="ChEBI" id="CHEBI:30616"/>
    </ligand>
</feature>
<feature type="binding site" evidence="1">
    <location>
        <position position="352"/>
    </location>
    <ligand>
        <name>L-glutamine</name>
        <dbReference type="ChEBI" id="CHEBI:58359"/>
    </ligand>
</feature>
<feature type="binding site" evidence="1">
    <location>
        <begin position="380"/>
        <end position="383"/>
    </location>
    <ligand>
        <name>L-glutamine</name>
        <dbReference type="ChEBI" id="CHEBI:58359"/>
    </ligand>
</feature>
<feature type="binding site" evidence="1">
    <location>
        <position position="403"/>
    </location>
    <ligand>
        <name>L-glutamine</name>
        <dbReference type="ChEBI" id="CHEBI:58359"/>
    </ligand>
</feature>
<feature type="binding site" evidence="1">
    <location>
        <position position="470"/>
    </location>
    <ligand>
        <name>L-glutamine</name>
        <dbReference type="ChEBI" id="CHEBI:58359"/>
    </ligand>
</feature>
<organism>
    <name type="scientific">Shewanella baltica (strain OS185)</name>
    <dbReference type="NCBI Taxonomy" id="402882"/>
    <lineage>
        <taxon>Bacteria</taxon>
        <taxon>Pseudomonadati</taxon>
        <taxon>Pseudomonadota</taxon>
        <taxon>Gammaproteobacteria</taxon>
        <taxon>Alteromonadales</taxon>
        <taxon>Shewanellaceae</taxon>
        <taxon>Shewanella</taxon>
    </lineage>
</organism>